<protein>
    <recommendedName>
        <fullName>Uncharacterized protein YedM</fullName>
    </recommendedName>
</protein>
<dbReference type="EMBL" id="L13279">
    <property type="status" value="NOT_ANNOTATED_CDS"/>
    <property type="molecule type" value="Genomic_DNA"/>
</dbReference>
<dbReference type="EMBL" id="U00096">
    <property type="status" value="NOT_ANNOTATED_CDS"/>
    <property type="molecule type" value="Genomic_DNA"/>
</dbReference>
<dbReference type="EMBL" id="AP009048">
    <property type="protein sequence ID" value="BAE76553.1"/>
    <property type="molecule type" value="Genomic_DNA"/>
</dbReference>
<dbReference type="PIR" id="D64957">
    <property type="entry name" value="D64957"/>
</dbReference>
<dbReference type="BioGRID" id="4261056">
    <property type="interactions" value="8"/>
</dbReference>
<dbReference type="IntAct" id="P76322">
    <property type="interactions" value="1"/>
</dbReference>
<dbReference type="KEGG" id="ecj:JW1920"/>
<dbReference type="PATRIC" id="fig|1411691.4.peg.315"/>
<dbReference type="EchoBASE" id="EB3065"/>
<dbReference type="HOGENOM" id="CLU_153539_0_0_6"/>
<dbReference type="InParanoid" id="P76322"/>
<dbReference type="PRO" id="PR:P76322"/>
<dbReference type="Proteomes" id="UP000000625">
    <property type="component" value="Chromosome"/>
</dbReference>
<dbReference type="InterPro" id="IPR020484">
    <property type="entry name" value="DUF5503"/>
</dbReference>
<dbReference type="Pfam" id="PF17607">
    <property type="entry name" value="DUF5503"/>
    <property type="match status" value="1"/>
</dbReference>
<gene>
    <name type="primary">yedM</name>
    <name type="ordered locus">b1935</name>
    <name type="ordered locus">JW1920</name>
</gene>
<accession>P76322</accession>
<accession>Q2MB03</accession>
<name>YEDM_ECOLI</name>
<feature type="chain" id="PRO_0000169095" description="Uncharacterized protein YedM">
    <location>
        <begin position="1"/>
        <end position="116"/>
    </location>
</feature>
<sequence>MFPLNDLSLKTQPVQLNKVTSNTESTIKQHELVSDDAIINELSSELVSCLGNGKFTPISEDSKLFNMLSEFKLLHSEYFEWGDYSLWFQDFSIYNKIGFIMIEKIRELVTHPFGIN</sequence>
<keyword id="KW-1185">Reference proteome</keyword>
<organism>
    <name type="scientific">Escherichia coli (strain K12)</name>
    <dbReference type="NCBI Taxonomy" id="83333"/>
    <lineage>
        <taxon>Bacteria</taxon>
        <taxon>Pseudomonadati</taxon>
        <taxon>Pseudomonadota</taxon>
        <taxon>Gammaproteobacteria</taxon>
        <taxon>Enterobacterales</taxon>
        <taxon>Enterobacteriaceae</taxon>
        <taxon>Escherichia</taxon>
    </lineage>
</organism>
<proteinExistence type="predicted"/>
<reference key="1">
    <citation type="journal article" date="1993" name="J. Gen. Microbiol.">
        <title>Organization of the Escherichia coli and Salmonella typhimurium chromosomes between flagellar regions IIIa and IIIb, including a large non-coding region.</title>
        <authorList>
            <person name="Raha M."/>
            <person name="Kihara M."/>
            <person name="Kawagishi I."/>
            <person name="Macnab R.M."/>
        </authorList>
    </citation>
    <scope>NUCLEOTIDE SEQUENCE [GENOMIC DNA]</scope>
    <source>
        <strain>JA11</strain>
    </source>
</reference>
<reference key="2">
    <citation type="journal article" date="1997" name="Science">
        <title>The complete genome sequence of Escherichia coli K-12.</title>
        <authorList>
            <person name="Blattner F.R."/>
            <person name="Plunkett G. III"/>
            <person name="Bloch C.A."/>
            <person name="Perna N.T."/>
            <person name="Burland V."/>
            <person name="Riley M."/>
            <person name="Collado-Vides J."/>
            <person name="Glasner J.D."/>
            <person name="Rode C.K."/>
            <person name="Mayhew G.F."/>
            <person name="Gregor J."/>
            <person name="Davis N.W."/>
            <person name="Kirkpatrick H.A."/>
            <person name="Goeden M.A."/>
            <person name="Rose D.J."/>
            <person name="Mau B."/>
            <person name="Shao Y."/>
        </authorList>
    </citation>
    <scope>NUCLEOTIDE SEQUENCE [LARGE SCALE GENOMIC DNA]</scope>
    <source>
        <strain>K12 / MG1655 / ATCC 47076</strain>
    </source>
</reference>
<reference key="3">
    <citation type="journal article" date="2006" name="Mol. Syst. Biol.">
        <title>Highly accurate genome sequences of Escherichia coli K-12 strains MG1655 and W3110.</title>
        <authorList>
            <person name="Hayashi K."/>
            <person name="Morooka N."/>
            <person name="Yamamoto Y."/>
            <person name="Fujita K."/>
            <person name="Isono K."/>
            <person name="Choi S."/>
            <person name="Ohtsubo E."/>
            <person name="Baba T."/>
            <person name="Wanner B.L."/>
            <person name="Mori H."/>
            <person name="Horiuchi T."/>
        </authorList>
    </citation>
    <scope>NUCLEOTIDE SEQUENCE [LARGE SCALE GENOMIC DNA]</scope>
    <source>
        <strain>K12 / W3110 / ATCC 27325 / DSM 5911</strain>
    </source>
</reference>